<comment type="function">
    <text evidence="1">Catalyzes the addition and repair of the essential 3'-terminal CCA sequence in tRNAs without using a nucleic acid template. Adds these three nucleotides in the order of C, C, and A to the tRNA nucleotide-73, using CTP and ATP as substrates and producing inorganic pyrophosphate. tRNA 3'-terminal CCA addition is required both for tRNA processing and repair. Also involved in tRNA surveillance by mediating tandem CCA addition to generate a CCACCA at the 3' terminus of unstable tRNAs. While stable tRNAs receive only 3'-terminal CCA, unstable tRNAs are marked with CCACCA and rapidly degraded.</text>
</comment>
<comment type="catalytic activity">
    <reaction evidence="1">
        <text>a tRNA precursor + 2 CTP + ATP = a tRNA with a 3' CCA end + 3 diphosphate</text>
        <dbReference type="Rhea" id="RHEA:14433"/>
        <dbReference type="Rhea" id="RHEA-COMP:10465"/>
        <dbReference type="Rhea" id="RHEA-COMP:10468"/>
        <dbReference type="ChEBI" id="CHEBI:30616"/>
        <dbReference type="ChEBI" id="CHEBI:33019"/>
        <dbReference type="ChEBI" id="CHEBI:37563"/>
        <dbReference type="ChEBI" id="CHEBI:74896"/>
        <dbReference type="ChEBI" id="CHEBI:83071"/>
        <dbReference type="EC" id="2.7.7.72"/>
    </reaction>
</comment>
<comment type="catalytic activity">
    <reaction evidence="1">
        <text>a tRNA with a 3' CCA end + 2 CTP + ATP = a tRNA with a 3' CCACCA end + 3 diphosphate</text>
        <dbReference type="Rhea" id="RHEA:76235"/>
        <dbReference type="Rhea" id="RHEA-COMP:10468"/>
        <dbReference type="Rhea" id="RHEA-COMP:18655"/>
        <dbReference type="ChEBI" id="CHEBI:30616"/>
        <dbReference type="ChEBI" id="CHEBI:33019"/>
        <dbReference type="ChEBI" id="CHEBI:37563"/>
        <dbReference type="ChEBI" id="CHEBI:83071"/>
        <dbReference type="ChEBI" id="CHEBI:195187"/>
    </reaction>
    <physiologicalReaction direction="left-to-right" evidence="1">
        <dbReference type="Rhea" id="RHEA:76236"/>
    </physiologicalReaction>
</comment>
<comment type="cofactor">
    <cofactor evidence="1">
        <name>Mg(2+)</name>
        <dbReference type="ChEBI" id="CHEBI:18420"/>
    </cofactor>
    <text evidence="1">Magnesium is required for nucleotidyltransferase activity.</text>
</comment>
<comment type="cofactor">
    <cofactor evidence="1">
        <name>Ni(2+)</name>
        <dbReference type="ChEBI" id="CHEBI:49786"/>
    </cofactor>
    <text evidence="1">Nickel for phosphatase activity.</text>
</comment>
<comment type="subunit">
    <text evidence="1">Monomer. Can also form homodimers and oligomers.</text>
</comment>
<comment type="domain">
    <text evidence="1">Comprises two domains: an N-terminal domain containing the nucleotidyltransferase activity and a C-terminal HD domain associated with both phosphodiesterase and phosphatase activities.</text>
</comment>
<comment type="miscellaneous">
    <text evidence="1">A single active site specifically recognizes both ATP and CTP and is responsible for their addition.</text>
</comment>
<comment type="similarity">
    <text evidence="1">Belongs to the tRNA nucleotidyltransferase/poly(A) polymerase family. Bacterial CCA-adding enzyme type 1 subfamily.</text>
</comment>
<dbReference type="EC" id="2.7.7.72" evidence="1"/>
<dbReference type="EC" id="3.1.3.-" evidence="1"/>
<dbReference type="EC" id="3.1.4.-" evidence="1"/>
<dbReference type="EMBL" id="CU207211">
    <property type="protein sequence ID" value="CAL63056.1"/>
    <property type="molecule type" value="Genomic_DNA"/>
</dbReference>
<dbReference type="SMR" id="A4G969"/>
<dbReference type="STRING" id="204773.HEAR2944"/>
<dbReference type="KEGG" id="har:HEAR2944"/>
<dbReference type="eggNOG" id="COG0617">
    <property type="taxonomic scope" value="Bacteria"/>
</dbReference>
<dbReference type="HOGENOM" id="CLU_015961_1_1_4"/>
<dbReference type="OrthoDB" id="9805698at2"/>
<dbReference type="Proteomes" id="UP000006697">
    <property type="component" value="Chromosome"/>
</dbReference>
<dbReference type="GO" id="GO:0005524">
    <property type="term" value="F:ATP binding"/>
    <property type="evidence" value="ECO:0007669"/>
    <property type="project" value="UniProtKB-UniRule"/>
</dbReference>
<dbReference type="GO" id="GO:0004810">
    <property type="term" value="F:CCA tRNA nucleotidyltransferase activity"/>
    <property type="evidence" value="ECO:0007669"/>
    <property type="project" value="UniProtKB-UniRule"/>
</dbReference>
<dbReference type="GO" id="GO:0004112">
    <property type="term" value="F:cyclic-nucleotide phosphodiesterase activity"/>
    <property type="evidence" value="ECO:0007669"/>
    <property type="project" value="UniProtKB-UniRule"/>
</dbReference>
<dbReference type="GO" id="GO:0000287">
    <property type="term" value="F:magnesium ion binding"/>
    <property type="evidence" value="ECO:0007669"/>
    <property type="project" value="UniProtKB-UniRule"/>
</dbReference>
<dbReference type="GO" id="GO:0016791">
    <property type="term" value="F:phosphatase activity"/>
    <property type="evidence" value="ECO:0007669"/>
    <property type="project" value="UniProtKB-UniRule"/>
</dbReference>
<dbReference type="GO" id="GO:0000049">
    <property type="term" value="F:tRNA binding"/>
    <property type="evidence" value="ECO:0007669"/>
    <property type="project" value="UniProtKB-UniRule"/>
</dbReference>
<dbReference type="GO" id="GO:0042245">
    <property type="term" value="P:RNA repair"/>
    <property type="evidence" value="ECO:0007669"/>
    <property type="project" value="UniProtKB-KW"/>
</dbReference>
<dbReference type="GO" id="GO:0001680">
    <property type="term" value="P:tRNA 3'-terminal CCA addition"/>
    <property type="evidence" value="ECO:0007669"/>
    <property type="project" value="UniProtKB-UniRule"/>
</dbReference>
<dbReference type="CDD" id="cd00077">
    <property type="entry name" value="HDc"/>
    <property type="match status" value="1"/>
</dbReference>
<dbReference type="CDD" id="cd05398">
    <property type="entry name" value="NT_ClassII-CCAase"/>
    <property type="match status" value="1"/>
</dbReference>
<dbReference type="Gene3D" id="3.30.460.10">
    <property type="entry name" value="Beta Polymerase, domain 2"/>
    <property type="match status" value="1"/>
</dbReference>
<dbReference type="Gene3D" id="1.10.3090.10">
    <property type="entry name" value="cca-adding enzyme, domain 2"/>
    <property type="match status" value="1"/>
</dbReference>
<dbReference type="HAMAP" id="MF_01261">
    <property type="entry name" value="CCA_bact_type1"/>
    <property type="match status" value="1"/>
</dbReference>
<dbReference type="InterPro" id="IPR012006">
    <property type="entry name" value="CCA_bact"/>
</dbReference>
<dbReference type="InterPro" id="IPR003607">
    <property type="entry name" value="HD/PDEase_dom"/>
</dbReference>
<dbReference type="InterPro" id="IPR006674">
    <property type="entry name" value="HD_domain"/>
</dbReference>
<dbReference type="InterPro" id="IPR043519">
    <property type="entry name" value="NT_sf"/>
</dbReference>
<dbReference type="InterPro" id="IPR002646">
    <property type="entry name" value="PolA_pol_head_dom"/>
</dbReference>
<dbReference type="InterPro" id="IPR032828">
    <property type="entry name" value="PolyA_RNA-bd"/>
</dbReference>
<dbReference type="InterPro" id="IPR050124">
    <property type="entry name" value="tRNA_CCA-adding_enzyme"/>
</dbReference>
<dbReference type="NCBIfam" id="NF008137">
    <property type="entry name" value="PRK10885.1"/>
    <property type="match status" value="1"/>
</dbReference>
<dbReference type="PANTHER" id="PTHR47545">
    <property type="entry name" value="MULTIFUNCTIONAL CCA PROTEIN"/>
    <property type="match status" value="1"/>
</dbReference>
<dbReference type="PANTHER" id="PTHR47545:SF1">
    <property type="entry name" value="MULTIFUNCTIONAL CCA PROTEIN"/>
    <property type="match status" value="1"/>
</dbReference>
<dbReference type="Pfam" id="PF01966">
    <property type="entry name" value="HD"/>
    <property type="match status" value="1"/>
</dbReference>
<dbReference type="Pfam" id="PF01743">
    <property type="entry name" value="PolyA_pol"/>
    <property type="match status" value="1"/>
</dbReference>
<dbReference type="Pfam" id="PF12627">
    <property type="entry name" value="PolyA_pol_RNAbd"/>
    <property type="match status" value="1"/>
</dbReference>
<dbReference type="PIRSF" id="PIRSF000813">
    <property type="entry name" value="CCA_bact"/>
    <property type="match status" value="1"/>
</dbReference>
<dbReference type="SUPFAM" id="SSF81301">
    <property type="entry name" value="Nucleotidyltransferase"/>
    <property type="match status" value="1"/>
</dbReference>
<dbReference type="SUPFAM" id="SSF81891">
    <property type="entry name" value="Poly A polymerase C-terminal region-like"/>
    <property type="match status" value="1"/>
</dbReference>
<dbReference type="PROSITE" id="PS51831">
    <property type="entry name" value="HD"/>
    <property type="match status" value="1"/>
</dbReference>
<name>CCA_HERAR</name>
<feature type="chain" id="PRO_1000054270" description="Multifunctional CCA protein">
    <location>
        <begin position="1"/>
        <end position="414"/>
    </location>
</feature>
<feature type="domain" description="HD" evidence="1">
    <location>
        <begin position="226"/>
        <end position="327"/>
    </location>
</feature>
<feature type="binding site" evidence="1">
    <location>
        <position position="8"/>
    </location>
    <ligand>
        <name>ATP</name>
        <dbReference type="ChEBI" id="CHEBI:30616"/>
    </ligand>
</feature>
<feature type="binding site" evidence="1">
    <location>
        <position position="8"/>
    </location>
    <ligand>
        <name>CTP</name>
        <dbReference type="ChEBI" id="CHEBI:37563"/>
    </ligand>
</feature>
<feature type="binding site" evidence="1">
    <location>
        <position position="11"/>
    </location>
    <ligand>
        <name>ATP</name>
        <dbReference type="ChEBI" id="CHEBI:30616"/>
    </ligand>
</feature>
<feature type="binding site" evidence="1">
    <location>
        <position position="11"/>
    </location>
    <ligand>
        <name>CTP</name>
        <dbReference type="ChEBI" id="CHEBI:37563"/>
    </ligand>
</feature>
<feature type="binding site" evidence="1">
    <location>
        <position position="21"/>
    </location>
    <ligand>
        <name>Mg(2+)</name>
        <dbReference type="ChEBI" id="CHEBI:18420"/>
    </ligand>
</feature>
<feature type="binding site" evidence="1">
    <location>
        <position position="23"/>
    </location>
    <ligand>
        <name>Mg(2+)</name>
        <dbReference type="ChEBI" id="CHEBI:18420"/>
    </ligand>
</feature>
<feature type="binding site" evidence="1">
    <location>
        <position position="91"/>
    </location>
    <ligand>
        <name>ATP</name>
        <dbReference type="ChEBI" id="CHEBI:30616"/>
    </ligand>
</feature>
<feature type="binding site" evidence="1">
    <location>
        <position position="91"/>
    </location>
    <ligand>
        <name>CTP</name>
        <dbReference type="ChEBI" id="CHEBI:37563"/>
    </ligand>
</feature>
<feature type="binding site" evidence="1">
    <location>
        <position position="137"/>
    </location>
    <ligand>
        <name>ATP</name>
        <dbReference type="ChEBI" id="CHEBI:30616"/>
    </ligand>
</feature>
<feature type="binding site" evidence="1">
    <location>
        <position position="137"/>
    </location>
    <ligand>
        <name>CTP</name>
        <dbReference type="ChEBI" id="CHEBI:37563"/>
    </ligand>
</feature>
<feature type="binding site" evidence="1">
    <location>
        <position position="140"/>
    </location>
    <ligand>
        <name>ATP</name>
        <dbReference type="ChEBI" id="CHEBI:30616"/>
    </ligand>
</feature>
<feature type="binding site" evidence="1">
    <location>
        <position position="140"/>
    </location>
    <ligand>
        <name>CTP</name>
        <dbReference type="ChEBI" id="CHEBI:37563"/>
    </ligand>
</feature>
<accession>A4G969</accession>
<sequence length="414" mass="46120">MKIYIVGGAVRDELLGVAVKDRDYVVVGATPEQMIAQNYTPVGKDFPVFLHPVTHEEYALARTERKTAPGYKGFVFHTDAGVTLEEDLIRRDLTVNAMAKDADGRIIDPFGGRRDLEQKIFRHVSSAFAEDPVRILRVARFAARFPQFSVAAETNALMQAMVAAGEVDALVPERTWQELARGLMEVQPSRMFAVLRDCGALQRMLPELDALWGVPQPEKYHPEIDTGVHVMMVVDHAAQQNLALPIRCAALFHDLGKGVTPPEMWPRHHGHEMQSAKLVETVCQRLKIPNDCRDLSVMTAREHGNIGRALELRAATIVTLFERCDAFRKPQRFIDMLQASECDHRGRTGFADVPFPQNAYMQKALAAAQTVNGGEIAALMQQRWPDQPARIPEAIHEARVKAVALAINEVKTPG</sequence>
<organism>
    <name type="scientific">Herminiimonas arsenicoxydans</name>
    <dbReference type="NCBI Taxonomy" id="204773"/>
    <lineage>
        <taxon>Bacteria</taxon>
        <taxon>Pseudomonadati</taxon>
        <taxon>Pseudomonadota</taxon>
        <taxon>Betaproteobacteria</taxon>
        <taxon>Burkholderiales</taxon>
        <taxon>Oxalobacteraceae</taxon>
        <taxon>Herminiimonas</taxon>
    </lineage>
</organism>
<keyword id="KW-0067">ATP-binding</keyword>
<keyword id="KW-0378">Hydrolase</keyword>
<keyword id="KW-0460">Magnesium</keyword>
<keyword id="KW-0479">Metal-binding</keyword>
<keyword id="KW-0511">Multifunctional enzyme</keyword>
<keyword id="KW-0533">Nickel</keyword>
<keyword id="KW-0547">Nucleotide-binding</keyword>
<keyword id="KW-0548">Nucleotidyltransferase</keyword>
<keyword id="KW-1185">Reference proteome</keyword>
<keyword id="KW-0692">RNA repair</keyword>
<keyword id="KW-0694">RNA-binding</keyword>
<keyword id="KW-0808">Transferase</keyword>
<keyword id="KW-0819">tRNA processing</keyword>
<evidence type="ECO:0000255" key="1">
    <source>
        <dbReference type="HAMAP-Rule" id="MF_01261"/>
    </source>
</evidence>
<protein>
    <recommendedName>
        <fullName evidence="1">Multifunctional CCA protein</fullName>
    </recommendedName>
    <domain>
        <recommendedName>
            <fullName evidence="1">CCA-adding enzyme</fullName>
            <ecNumber evidence="1">2.7.7.72</ecNumber>
        </recommendedName>
        <alternativeName>
            <fullName evidence="1">CCA tRNA nucleotidyltransferase</fullName>
        </alternativeName>
        <alternativeName>
            <fullName evidence="1">tRNA CCA-pyrophosphorylase</fullName>
        </alternativeName>
        <alternativeName>
            <fullName evidence="1">tRNA adenylyl-/cytidylyl-transferase</fullName>
        </alternativeName>
        <alternativeName>
            <fullName evidence="1">tRNA nucleotidyltransferase</fullName>
        </alternativeName>
        <alternativeName>
            <fullName evidence="1">tRNA-NT</fullName>
        </alternativeName>
    </domain>
    <domain>
        <recommendedName>
            <fullName evidence="1">2'-nucleotidase</fullName>
            <ecNumber evidence="1">3.1.3.-</ecNumber>
        </recommendedName>
    </domain>
    <domain>
        <recommendedName>
            <fullName evidence="1">2',3'-cyclic phosphodiesterase</fullName>
            <ecNumber evidence="1">3.1.4.-</ecNumber>
        </recommendedName>
    </domain>
    <domain>
        <recommendedName>
            <fullName evidence="1">Phosphatase</fullName>
            <ecNumber evidence="1">3.1.3.-</ecNumber>
        </recommendedName>
    </domain>
</protein>
<reference key="1">
    <citation type="journal article" date="2007" name="PLoS Genet.">
        <title>A tale of two oxidation states: bacterial colonization of arsenic-rich environments.</title>
        <authorList>
            <person name="Muller D."/>
            <person name="Medigue C."/>
            <person name="Koechler S."/>
            <person name="Barbe V."/>
            <person name="Barakat M."/>
            <person name="Talla E."/>
            <person name="Bonnefoy V."/>
            <person name="Krin E."/>
            <person name="Arsene-Ploetze F."/>
            <person name="Carapito C."/>
            <person name="Chandler M."/>
            <person name="Cournoyer B."/>
            <person name="Cruveiller S."/>
            <person name="Dossat C."/>
            <person name="Duval S."/>
            <person name="Heymann M."/>
            <person name="Leize E."/>
            <person name="Lieutaud A."/>
            <person name="Lievremont D."/>
            <person name="Makita Y."/>
            <person name="Mangenot S."/>
            <person name="Nitschke W."/>
            <person name="Ortet P."/>
            <person name="Perdrial N."/>
            <person name="Schoepp B."/>
            <person name="Siguier P."/>
            <person name="Simeonova D.D."/>
            <person name="Rouy Z."/>
            <person name="Segurens B."/>
            <person name="Turlin E."/>
            <person name="Vallenet D."/>
            <person name="van Dorsselaer A."/>
            <person name="Weiss S."/>
            <person name="Weissenbach J."/>
            <person name="Lett M.-C."/>
            <person name="Danchin A."/>
            <person name="Bertin P.N."/>
        </authorList>
    </citation>
    <scope>NUCLEOTIDE SEQUENCE [LARGE SCALE GENOMIC DNA]</scope>
    <source>
        <strain>ULPAs1</strain>
    </source>
</reference>
<proteinExistence type="inferred from homology"/>
<gene>
    <name evidence="1" type="primary">cca</name>
    <name type="ordered locus">HEAR2944</name>
</gene>